<gene>
    <name evidence="1" type="primary">xpt</name>
    <name type="ordered locus">SAS0364</name>
</gene>
<comment type="function">
    <text evidence="1">Converts the preformed base xanthine, a product of nucleic acid breakdown, to xanthosine 5'-monophosphate (XMP), so it can be reused for RNA or DNA synthesis.</text>
</comment>
<comment type="catalytic activity">
    <reaction evidence="1">
        <text>XMP + diphosphate = xanthine + 5-phospho-alpha-D-ribose 1-diphosphate</text>
        <dbReference type="Rhea" id="RHEA:10800"/>
        <dbReference type="ChEBI" id="CHEBI:17712"/>
        <dbReference type="ChEBI" id="CHEBI:33019"/>
        <dbReference type="ChEBI" id="CHEBI:57464"/>
        <dbReference type="ChEBI" id="CHEBI:58017"/>
        <dbReference type="EC" id="2.4.2.22"/>
    </reaction>
</comment>
<comment type="pathway">
    <text evidence="1">Purine metabolism; XMP biosynthesis via salvage pathway; XMP from xanthine: step 1/1.</text>
</comment>
<comment type="subunit">
    <text evidence="1">Homodimer.</text>
</comment>
<comment type="subcellular location">
    <subcellularLocation>
        <location evidence="1">Cytoplasm</location>
    </subcellularLocation>
</comment>
<comment type="similarity">
    <text evidence="1">Belongs to the purine/pyrimidine phosphoribosyltransferase family. Xpt subfamily.</text>
</comment>
<accession>Q6GC84</accession>
<name>XPT_STAAS</name>
<protein>
    <recommendedName>
        <fullName evidence="1">Xanthine phosphoribosyltransferase</fullName>
        <shortName evidence="1">XPRTase</shortName>
        <ecNumber evidence="1">2.4.2.22</ecNumber>
    </recommendedName>
</protein>
<feature type="chain" id="PRO_0000339746" description="Xanthine phosphoribosyltransferase">
    <location>
        <begin position="1"/>
        <end position="192"/>
    </location>
</feature>
<feature type="binding site" evidence="1">
    <location>
        <position position="20"/>
    </location>
    <ligand>
        <name>xanthine</name>
        <dbReference type="ChEBI" id="CHEBI:17712"/>
    </ligand>
</feature>
<feature type="binding site" evidence="1">
    <location>
        <position position="27"/>
    </location>
    <ligand>
        <name>xanthine</name>
        <dbReference type="ChEBI" id="CHEBI:17712"/>
    </ligand>
</feature>
<feature type="binding site" evidence="1">
    <location>
        <begin position="128"/>
        <end position="132"/>
    </location>
    <ligand>
        <name>5-phospho-alpha-D-ribose 1-diphosphate</name>
        <dbReference type="ChEBI" id="CHEBI:58017"/>
    </ligand>
</feature>
<feature type="binding site" evidence="1">
    <location>
        <position position="156"/>
    </location>
    <ligand>
        <name>xanthine</name>
        <dbReference type="ChEBI" id="CHEBI:17712"/>
    </ligand>
</feature>
<dbReference type="EC" id="2.4.2.22" evidence="1"/>
<dbReference type="EMBL" id="BX571857">
    <property type="protein sequence ID" value="CAG42136.1"/>
    <property type="molecule type" value="Genomic_DNA"/>
</dbReference>
<dbReference type="RefSeq" id="WP_000421410.1">
    <property type="nucleotide sequence ID" value="NC_002953.3"/>
</dbReference>
<dbReference type="SMR" id="Q6GC84"/>
<dbReference type="GeneID" id="66838694"/>
<dbReference type="KEGG" id="sas:SAS0364"/>
<dbReference type="HOGENOM" id="CLU_099015_0_0_9"/>
<dbReference type="UniPathway" id="UPA00602">
    <property type="reaction ID" value="UER00658"/>
</dbReference>
<dbReference type="GO" id="GO:0005737">
    <property type="term" value="C:cytoplasm"/>
    <property type="evidence" value="ECO:0007669"/>
    <property type="project" value="UniProtKB-SubCell"/>
</dbReference>
<dbReference type="GO" id="GO:0000310">
    <property type="term" value="F:xanthine phosphoribosyltransferase activity"/>
    <property type="evidence" value="ECO:0007669"/>
    <property type="project" value="UniProtKB-UniRule"/>
</dbReference>
<dbReference type="GO" id="GO:0006166">
    <property type="term" value="P:purine ribonucleoside salvage"/>
    <property type="evidence" value="ECO:0007669"/>
    <property type="project" value="UniProtKB-KW"/>
</dbReference>
<dbReference type="GO" id="GO:0046110">
    <property type="term" value="P:xanthine metabolic process"/>
    <property type="evidence" value="ECO:0007669"/>
    <property type="project" value="InterPro"/>
</dbReference>
<dbReference type="GO" id="GO:0032265">
    <property type="term" value="P:XMP salvage"/>
    <property type="evidence" value="ECO:0007669"/>
    <property type="project" value="UniProtKB-UniRule"/>
</dbReference>
<dbReference type="CDD" id="cd06223">
    <property type="entry name" value="PRTases_typeI"/>
    <property type="match status" value="1"/>
</dbReference>
<dbReference type="Gene3D" id="3.40.50.2020">
    <property type="match status" value="1"/>
</dbReference>
<dbReference type="HAMAP" id="MF_01184">
    <property type="entry name" value="XPRTase"/>
    <property type="match status" value="1"/>
</dbReference>
<dbReference type="InterPro" id="IPR000836">
    <property type="entry name" value="PRibTrfase_dom"/>
</dbReference>
<dbReference type="InterPro" id="IPR029057">
    <property type="entry name" value="PRTase-like"/>
</dbReference>
<dbReference type="InterPro" id="IPR050118">
    <property type="entry name" value="Pur/Pyrimidine_PRTase"/>
</dbReference>
<dbReference type="InterPro" id="IPR010079">
    <property type="entry name" value="Xanthine_PRibTrfase"/>
</dbReference>
<dbReference type="NCBIfam" id="NF006671">
    <property type="entry name" value="PRK09219.1"/>
    <property type="match status" value="1"/>
</dbReference>
<dbReference type="NCBIfam" id="TIGR01744">
    <property type="entry name" value="XPRTase"/>
    <property type="match status" value="1"/>
</dbReference>
<dbReference type="PANTHER" id="PTHR43864">
    <property type="entry name" value="HYPOXANTHINE/GUANINE PHOSPHORIBOSYLTRANSFERASE"/>
    <property type="match status" value="1"/>
</dbReference>
<dbReference type="PANTHER" id="PTHR43864:SF1">
    <property type="entry name" value="XANTHINE PHOSPHORIBOSYLTRANSFERASE"/>
    <property type="match status" value="1"/>
</dbReference>
<dbReference type="SUPFAM" id="SSF53271">
    <property type="entry name" value="PRTase-like"/>
    <property type="match status" value="1"/>
</dbReference>
<organism>
    <name type="scientific">Staphylococcus aureus (strain MSSA476)</name>
    <dbReference type="NCBI Taxonomy" id="282459"/>
    <lineage>
        <taxon>Bacteria</taxon>
        <taxon>Bacillati</taxon>
        <taxon>Bacillota</taxon>
        <taxon>Bacilli</taxon>
        <taxon>Bacillales</taxon>
        <taxon>Staphylococcaceae</taxon>
        <taxon>Staphylococcus</taxon>
    </lineage>
</organism>
<proteinExistence type="inferred from homology"/>
<sequence length="192" mass="20884">MELLGQKVKEDGVVIDEKILKVDGFLNHQIDAKLMNEVGRTFYEQFKDKGITKILTIEASGIAPAIMAALHFDVPCLFAKKAKPSTLTDGYYETSIHSFTKNKTSTVIVSKEFLSEEDTVLIIDDFLANGDASLGLYDIAQQANAKTAGIGIVVEKSFQNGHQRLEEAGLTVSSLCKVASLEGNKVTLVGEE</sequence>
<keyword id="KW-0963">Cytoplasm</keyword>
<keyword id="KW-0328">Glycosyltransferase</keyword>
<keyword id="KW-0660">Purine salvage</keyword>
<keyword id="KW-0808">Transferase</keyword>
<evidence type="ECO:0000255" key="1">
    <source>
        <dbReference type="HAMAP-Rule" id="MF_01184"/>
    </source>
</evidence>
<reference key="1">
    <citation type="journal article" date="2004" name="Proc. Natl. Acad. Sci. U.S.A.">
        <title>Complete genomes of two clinical Staphylococcus aureus strains: evidence for the rapid evolution of virulence and drug resistance.</title>
        <authorList>
            <person name="Holden M.T.G."/>
            <person name="Feil E.J."/>
            <person name="Lindsay J.A."/>
            <person name="Peacock S.J."/>
            <person name="Day N.P.J."/>
            <person name="Enright M.C."/>
            <person name="Foster T.J."/>
            <person name="Moore C.E."/>
            <person name="Hurst L."/>
            <person name="Atkin R."/>
            <person name="Barron A."/>
            <person name="Bason N."/>
            <person name="Bentley S.D."/>
            <person name="Chillingworth C."/>
            <person name="Chillingworth T."/>
            <person name="Churcher C."/>
            <person name="Clark L."/>
            <person name="Corton C."/>
            <person name="Cronin A."/>
            <person name="Doggett J."/>
            <person name="Dowd L."/>
            <person name="Feltwell T."/>
            <person name="Hance Z."/>
            <person name="Harris B."/>
            <person name="Hauser H."/>
            <person name="Holroyd S."/>
            <person name="Jagels K."/>
            <person name="James K.D."/>
            <person name="Lennard N."/>
            <person name="Line A."/>
            <person name="Mayes R."/>
            <person name="Moule S."/>
            <person name="Mungall K."/>
            <person name="Ormond D."/>
            <person name="Quail M.A."/>
            <person name="Rabbinowitsch E."/>
            <person name="Rutherford K.M."/>
            <person name="Sanders M."/>
            <person name="Sharp S."/>
            <person name="Simmonds M."/>
            <person name="Stevens K."/>
            <person name="Whitehead S."/>
            <person name="Barrell B.G."/>
            <person name="Spratt B.G."/>
            <person name="Parkhill J."/>
        </authorList>
    </citation>
    <scope>NUCLEOTIDE SEQUENCE [LARGE SCALE GENOMIC DNA]</scope>
    <source>
        <strain>MSSA476</strain>
    </source>
</reference>